<organism>
    <name type="scientific">Homo sapiens</name>
    <name type="common">Human</name>
    <dbReference type="NCBI Taxonomy" id="9606"/>
    <lineage>
        <taxon>Eukaryota</taxon>
        <taxon>Metazoa</taxon>
        <taxon>Chordata</taxon>
        <taxon>Craniata</taxon>
        <taxon>Vertebrata</taxon>
        <taxon>Euteleostomi</taxon>
        <taxon>Mammalia</taxon>
        <taxon>Eutheria</taxon>
        <taxon>Euarchontoglires</taxon>
        <taxon>Primates</taxon>
        <taxon>Haplorrhini</taxon>
        <taxon>Catarrhini</taxon>
        <taxon>Hominidae</taxon>
        <taxon>Homo</taxon>
    </lineage>
</organism>
<keyword id="KW-0025">Alternative splicing</keyword>
<keyword id="KW-0225">Disease variant</keyword>
<keyword id="KW-0249">Electron transport</keyword>
<keyword id="KW-0274">FAD</keyword>
<keyword id="KW-0285">Flavoprotein</keyword>
<keyword id="KW-0472">Membrane</keyword>
<keyword id="KW-0496">Mitochondrion</keyword>
<keyword id="KW-0999">Mitochondrion inner membrane</keyword>
<keyword id="KW-0560">Oxidoreductase</keyword>
<keyword id="KW-1274">Primary mitochondrial disease</keyword>
<keyword id="KW-1267">Proteomics identification</keyword>
<keyword id="KW-1185">Reference proteome</keyword>
<keyword id="KW-0679">Respiratory chain</keyword>
<keyword id="KW-0812">Transmembrane</keyword>
<keyword id="KW-1133">Transmembrane helix</keyword>
<keyword id="KW-0813">Transport</keyword>
<evidence type="ECO:0000250" key="1"/>
<evidence type="ECO:0000255" key="2"/>
<evidence type="ECO:0000269" key="3">
    <source>
    </source>
</evidence>
<evidence type="ECO:0000269" key="4">
    <source>
    </source>
</evidence>
<evidence type="ECO:0000269" key="5">
    <source>
    </source>
</evidence>
<evidence type="ECO:0000269" key="6">
    <source>
    </source>
</evidence>
<evidence type="ECO:0000303" key="7">
    <source>
    </source>
</evidence>
<evidence type="ECO:0000303" key="8">
    <source ref="3"/>
</evidence>
<evidence type="ECO:0000305" key="9"/>
<evidence type="ECO:0000305" key="10">
    <source>
    </source>
</evidence>
<evidence type="ECO:0000312" key="11">
    <source>
        <dbReference type="HGNC" id="HGNC:26927"/>
    </source>
</evidence>
<comment type="function">
    <text evidence="5 6">Required for the assembly of the mitochondrial membrane respiratory chain NADH dehydrogenase (Complex I) (PubMed:20858599, PubMed:25678554). Involved in mid-late stages of complex I assembly (PubMed:25678554).</text>
</comment>
<comment type="cofactor">
    <cofactor evidence="1">
        <name>FAD</name>
        <dbReference type="ChEBI" id="CHEBI:57692"/>
    </cofactor>
</comment>
<comment type="subunit">
    <text evidence="6">Associates with components of the mitochondrial respiratory chain complex I.</text>
</comment>
<comment type="subcellular location">
    <subcellularLocation>
        <location evidence="5 10">Mitochondrion inner membrane</location>
        <topology evidence="2">Single-pass membrane protein</topology>
    </subcellularLocation>
    <text evidence="10">According to a report, it is associated with the matrix face of the mitochondrial inner membrane and does not contain any transmembrane region. However, one transmembrane domain is clearly predicted by different methods (Probable).</text>
</comment>
<comment type="alternative products">
    <event type="alternative splicing"/>
    <isoform>
        <id>Q96CU9-1</id>
        <name>1</name>
        <sequence type="displayed"/>
    </isoform>
    <isoform>
        <id>Q96CU9-2</id>
        <name>2</name>
        <sequence type="described" ref="VSP_022629"/>
    </isoform>
    <isoform>
        <id>Q96CU9-3</id>
        <name>3</name>
        <sequence type="described" ref="VSP_039003"/>
    </isoform>
</comment>
<comment type="disease" evidence="4 5 6">
    <disease id="DI-05416">
        <name>Mitochondrial complex I deficiency, nuclear type 19</name>
        <acronym>MC1DN19</acronym>
        <description>A form of mitochondrial complex I deficiency, the most common biochemical signature of mitochondrial disorders, a group of highly heterogeneous conditions characterized by defective oxidative phosphorylation, which collectively affects 1 in 5-10000 live births. Clinical disorders have variable severity, ranging from lethal neonatal disease to adult-onset neurodegenerative disorders. Phenotypes include macrocephaly with progressive leukodystrophy, non-specific encephalopathy, cardiomyopathy, myopathy, liver disease, Leigh syndrome, Leber hereditary optic neuropathy, and some forms of Parkinson disease. MC1DN19 transmission pattern is consistent with autosomal recessive inheritance.</description>
        <dbReference type="MIM" id="618241"/>
    </disease>
    <text>The disease is caused by variants affecting the gene represented in this entry.</text>
</comment>
<protein>
    <recommendedName>
        <fullName evidence="11">FAD-dependent oxidoreductase domain-containing protein 1</fullName>
        <ecNumber>1.-.-.-</ecNumber>
    </recommendedName>
</protein>
<dbReference type="EC" id="1.-.-.-"/>
<dbReference type="EMBL" id="AF103801">
    <property type="protein sequence ID" value="AAF02421.1"/>
    <property type="molecule type" value="mRNA"/>
</dbReference>
<dbReference type="EMBL" id="AL136923">
    <property type="protein sequence ID" value="CAB66857.1"/>
    <property type="molecule type" value="mRNA"/>
</dbReference>
<dbReference type="EMBL" id="AF447877">
    <property type="protein sequence ID" value="AAQ04652.1"/>
    <property type="molecule type" value="mRNA"/>
</dbReference>
<dbReference type="EMBL" id="AK023987">
    <property type="protein sequence ID" value="BAG51246.1"/>
    <property type="molecule type" value="mRNA"/>
</dbReference>
<dbReference type="EMBL" id="AK295267">
    <property type="protein sequence ID" value="BAG58254.1"/>
    <property type="molecule type" value="mRNA"/>
</dbReference>
<dbReference type="EMBL" id="CH471065">
    <property type="protein sequence ID" value="EAW67683.1"/>
    <property type="molecule type" value="Genomic_DNA"/>
</dbReference>
<dbReference type="EMBL" id="BC002910">
    <property type="protein sequence ID" value="AAH02910.2"/>
    <property type="molecule type" value="mRNA"/>
</dbReference>
<dbReference type="EMBL" id="BC013902">
    <property type="protein sequence ID" value="AAH13902.1"/>
    <property type="molecule type" value="mRNA"/>
</dbReference>
<dbReference type="CCDS" id="CCDS8471.1">
    <molecule id="Q96CU9-1"/>
</dbReference>
<dbReference type="RefSeq" id="NP_001412102.1">
    <molecule id="Q96CU9-2"/>
    <property type="nucleotide sequence ID" value="NM_001425173.1"/>
</dbReference>
<dbReference type="RefSeq" id="NP_001412103.1">
    <molecule id="Q96CU9-2"/>
    <property type="nucleotide sequence ID" value="NM_001425174.1"/>
</dbReference>
<dbReference type="RefSeq" id="NP_060017.1">
    <molecule id="Q96CU9-1"/>
    <property type="nucleotide sequence ID" value="NM_017547.4"/>
</dbReference>
<dbReference type="RefSeq" id="XP_006718944.1">
    <property type="nucleotide sequence ID" value="XM_006718881.3"/>
</dbReference>
<dbReference type="RefSeq" id="XP_016873492.1">
    <property type="nucleotide sequence ID" value="XM_017018003.1"/>
</dbReference>
<dbReference type="RefSeq" id="XP_016873493.1">
    <property type="nucleotide sequence ID" value="XM_017018004.1"/>
</dbReference>
<dbReference type="RefSeq" id="XP_016873494.1">
    <property type="nucleotide sequence ID" value="XM_017018005.1"/>
</dbReference>
<dbReference type="RefSeq" id="XP_047283209.1">
    <molecule id="Q96CU9-2"/>
    <property type="nucleotide sequence ID" value="XM_047427253.1"/>
</dbReference>
<dbReference type="RefSeq" id="XP_054225317.1">
    <molecule id="Q96CU9-2"/>
    <property type="nucleotide sequence ID" value="XM_054369342.1"/>
</dbReference>
<dbReference type="SMR" id="Q96CU9"/>
<dbReference type="BioGRID" id="120725">
    <property type="interactions" value="82"/>
</dbReference>
<dbReference type="FunCoup" id="Q96CU9">
    <property type="interactions" value="886"/>
</dbReference>
<dbReference type="IntAct" id="Q96CU9">
    <property type="interactions" value="38"/>
</dbReference>
<dbReference type="MINT" id="Q96CU9"/>
<dbReference type="STRING" id="9606.ENSP00000263578"/>
<dbReference type="GlyGen" id="Q96CU9">
    <property type="glycosylation" value="1 site, 1 O-linked glycan (1 site)"/>
</dbReference>
<dbReference type="iPTMnet" id="Q96CU9"/>
<dbReference type="PhosphoSitePlus" id="Q96CU9"/>
<dbReference type="SwissPalm" id="Q96CU9"/>
<dbReference type="BioMuta" id="FOXRED1"/>
<dbReference type="DMDM" id="124007188"/>
<dbReference type="jPOST" id="Q96CU9"/>
<dbReference type="MassIVE" id="Q96CU9"/>
<dbReference type="PaxDb" id="9606-ENSP00000263578"/>
<dbReference type="PeptideAtlas" id="Q96CU9"/>
<dbReference type="ProteomicsDB" id="76223">
    <molecule id="Q96CU9-1"/>
</dbReference>
<dbReference type="ProteomicsDB" id="76224">
    <molecule id="Q96CU9-2"/>
</dbReference>
<dbReference type="ProteomicsDB" id="76225">
    <molecule id="Q96CU9-3"/>
</dbReference>
<dbReference type="Pumba" id="Q96CU9"/>
<dbReference type="Antibodypedia" id="32986">
    <property type="antibodies" value="164 antibodies from 27 providers"/>
</dbReference>
<dbReference type="DNASU" id="55572"/>
<dbReference type="Ensembl" id="ENST00000263578.10">
    <molecule id="Q96CU9-1"/>
    <property type="protein sequence ID" value="ENSP00000263578.5"/>
    <property type="gene ID" value="ENSG00000110074.12"/>
</dbReference>
<dbReference type="GeneID" id="55572"/>
<dbReference type="KEGG" id="hsa:55572"/>
<dbReference type="MANE-Select" id="ENST00000263578.10">
    <property type="protein sequence ID" value="ENSP00000263578.5"/>
    <property type="RefSeq nucleotide sequence ID" value="NM_017547.4"/>
    <property type="RefSeq protein sequence ID" value="NP_060017.1"/>
</dbReference>
<dbReference type="UCSC" id="uc001qdi.4">
    <molecule id="Q96CU9-1"/>
    <property type="organism name" value="human"/>
</dbReference>
<dbReference type="AGR" id="HGNC:26927"/>
<dbReference type="CTD" id="55572"/>
<dbReference type="DisGeNET" id="55572"/>
<dbReference type="GeneCards" id="FOXRED1"/>
<dbReference type="HGNC" id="HGNC:26927">
    <property type="gene designation" value="FOXRED1"/>
</dbReference>
<dbReference type="HPA" id="ENSG00000110074">
    <property type="expression patterns" value="Low tissue specificity"/>
</dbReference>
<dbReference type="MalaCards" id="FOXRED1"/>
<dbReference type="MIM" id="613622">
    <property type="type" value="gene"/>
</dbReference>
<dbReference type="MIM" id="618241">
    <property type="type" value="phenotype"/>
</dbReference>
<dbReference type="neXtProt" id="NX_Q96CU9"/>
<dbReference type="OpenTargets" id="ENSG00000110074"/>
<dbReference type="Orphanet" id="2609">
    <property type="disease" value="Isolated complex I deficiency"/>
</dbReference>
<dbReference type="PharmGKB" id="PA143485473"/>
<dbReference type="VEuPathDB" id="HostDB:ENSG00000110074"/>
<dbReference type="eggNOG" id="KOG2853">
    <property type="taxonomic scope" value="Eukaryota"/>
</dbReference>
<dbReference type="GeneTree" id="ENSGT00390000006114"/>
<dbReference type="HOGENOM" id="CLU_007884_4_4_1"/>
<dbReference type="InParanoid" id="Q96CU9"/>
<dbReference type="OMA" id="PDHNALI"/>
<dbReference type="OrthoDB" id="424974at2759"/>
<dbReference type="PAN-GO" id="Q96CU9">
    <property type="GO annotations" value="3 GO annotations based on evolutionary models"/>
</dbReference>
<dbReference type="PhylomeDB" id="Q96CU9"/>
<dbReference type="TreeFam" id="TF314003"/>
<dbReference type="PathwayCommons" id="Q96CU9"/>
<dbReference type="Reactome" id="R-HSA-6799198">
    <property type="pathway name" value="Complex I biogenesis"/>
</dbReference>
<dbReference type="SignaLink" id="Q96CU9"/>
<dbReference type="BioGRID-ORCS" id="55572">
    <property type="hits" value="140 hits in 1161 CRISPR screens"/>
</dbReference>
<dbReference type="ChiTaRS" id="FOXRED1">
    <property type="organism name" value="human"/>
</dbReference>
<dbReference type="GeneWiki" id="FOXRED1"/>
<dbReference type="GenomeRNAi" id="55572"/>
<dbReference type="Pharos" id="Q96CU9">
    <property type="development level" value="Tbio"/>
</dbReference>
<dbReference type="PRO" id="PR:Q96CU9"/>
<dbReference type="Proteomes" id="UP000005640">
    <property type="component" value="Chromosome 11"/>
</dbReference>
<dbReference type="RNAct" id="Q96CU9">
    <property type="molecule type" value="protein"/>
</dbReference>
<dbReference type="Bgee" id="ENSG00000110074">
    <property type="expression patterns" value="Expressed in right hemisphere of cerebellum and 161 other cell types or tissues"/>
</dbReference>
<dbReference type="ExpressionAtlas" id="Q96CU9">
    <property type="expression patterns" value="baseline and differential"/>
</dbReference>
<dbReference type="GO" id="GO:0005737">
    <property type="term" value="C:cytoplasm"/>
    <property type="evidence" value="ECO:0000318"/>
    <property type="project" value="GO_Central"/>
</dbReference>
<dbReference type="GO" id="GO:0005743">
    <property type="term" value="C:mitochondrial inner membrane"/>
    <property type="evidence" value="ECO:0000314"/>
    <property type="project" value="UniProtKB"/>
</dbReference>
<dbReference type="GO" id="GO:0005739">
    <property type="term" value="C:mitochondrion"/>
    <property type="evidence" value="ECO:0000314"/>
    <property type="project" value="HPA"/>
</dbReference>
<dbReference type="GO" id="GO:0016491">
    <property type="term" value="F:oxidoreductase activity"/>
    <property type="evidence" value="ECO:0007669"/>
    <property type="project" value="UniProtKB-KW"/>
</dbReference>
<dbReference type="GO" id="GO:0032981">
    <property type="term" value="P:mitochondrial respiratory chain complex I assembly"/>
    <property type="evidence" value="ECO:0000315"/>
    <property type="project" value="UniProtKB"/>
</dbReference>
<dbReference type="FunFam" id="3.30.9.10:FF:000155">
    <property type="entry name" value="FAD-dependent oxidoreductase domain-containing 1"/>
    <property type="match status" value="1"/>
</dbReference>
<dbReference type="Gene3D" id="3.30.9.10">
    <property type="entry name" value="D-Amino Acid Oxidase, subunit A, domain 2"/>
    <property type="match status" value="1"/>
</dbReference>
<dbReference type="Gene3D" id="3.50.50.60">
    <property type="entry name" value="FAD/NAD(P)-binding domain"/>
    <property type="match status" value="1"/>
</dbReference>
<dbReference type="InterPro" id="IPR006076">
    <property type="entry name" value="FAD-dep_OxRdtase"/>
</dbReference>
<dbReference type="InterPro" id="IPR036188">
    <property type="entry name" value="FAD/NAD-bd_sf"/>
</dbReference>
<dbReference type="PANTHER" id="PTHR13847:SF287">
    <property type="entry name" value="FAD-DEPENDENT OXIDOREDUCTASE DOMAIN-CONTAINING PROTEIN 1"/>
    <property type="match status" value="1"/>
</dbReference>
<dbReference type="PANTHER" id="PTHR13847">
    <property type="entry name" value="SARCOSINE DEHYDROGENASE-RELATED"/>
    <property type="match status" value="1"/>
</dbReference>
<dbReference type="Pfam" id="PF01266">
    <property type="entry name" value="DAO"/>
    <property type="match status" value="1"/>
</dbReference>
<dbReference type="SUPFAM" id="SSF51905">
    <property type="entry name" value="FAD/NAD(P)-binding domain"/>
    <property type="match status" value="1"/>
</dbReference>
<reference key="1">
    <citation type="journal article" date="1999" name="Nucleic Acids Res.">
        <title>Identification of differentially expressed genes associated with HER-2/neu overexpression in human breast cancer cells.</title>
        <authorList>
            <person name="Oh J.J."/>
            <person name="Grosshans D.R."/>
            <person name="Wong S.G."/>
            <person name="Slamon D.J."/>
        </authorList>
    </citation>
    <scope>NUCLEOTIDE SEQUENCE [MRNA] (ISOFORM 1)</scope>
</reference>
<reference key="2">
    <citation type="journal article" date="2001" name="Genome Res.">
        <title>Towards a catalog of human genes and proteins: sequencing and analysis of 500 novel complete protein coding human cDNAs.</title>
        <authorList>
            <person name="Wiemann S."/>
            <person name="Weil B."/>
            <person name="Wellenreuther R."/>
            <person name="Gassenhuber J."/>
            <person name="Glassl S."/>
            <person name="Ansorge W."/>
            <person name="Boecher M."/>
            <person name="Bloecker H."/>
            <person name="Bauersachs S."/>
            <person name="Blum H."/>
            <person name="Lauber J."/>
            <person name="Duesterhoeft A."/>
            <person name="Beyer A."/>
            <person name="Koehrer K."/>
            <person name="Strack N."/>
            <person name="Mewes H.-W."/>
            <person name="Ottenwaelder B."/>
            <person name="Obermaier B."/>
            <person name="Tampe J."/>
            <person name="Heubner D."/>
            <person name="Wambutt R."/>
            <person name="Korn B."/>
            <person name="Klein M."/>
            <person name="Poustka A."/>
        </authorList>
    </citation>
    <scope>NUCLEOTIDE SEQUENCE [LARGE SCALE MRNA] (ISOFORM 1)</scope>
    <source>
        <tissue>Uterus</tissue>
    </source>
</reference>
<reference key="3">
    <citation type="submission" date="2001-11" db="EMBL/GenBank/DDBJ databases">
        <title>Novel human cDNA clones with function of affecting cancer cell growth.</title>
        <authorList>
            <person name="Zhou X.M."/>
            <person name="Qin W.X."/>
            <person name="Wan D.F."/>
            <person name="Zhang P.P."/>
            <person name="Jiang H.Q."/>
            <person name="Huang Y."/>
            <person name="Zhao X.T."/>
            <person name="Gu J.R."/>
        </authorList>
    </citation>
    <scope>NUCLEOTIDE SEQUENCE [LARGE SCALE MRNA] (ISOFORM 2)</scope>
</reference>
<reference key="4">
    <citation type="journal article" date="2004" name="Nat. Genet.">
        <title>Complete sequencing and characterization of 21,243 full-length human cDNAs.</title>
        <authorList>
            <person name="Ota T."/>
            <person name="Suzuki Y."/>
            <person name="Nishikawa T."/>
            <person name="Otsuki T."/>
            <person name="Sugiyama T."/>
            <person name="Irie R."/>
            <person name="Wakamatsu A."/>
            <person name="Hayashi K."/>
            <person name="Sato H."/>
            <person name="Nagai K."/>
            <person name="Kimura K."/>
            <person name="Makita H."/>
            <person name="Sekine M."/>
            <person name="Obayashi M."/>
            <person name="Nishi T."/>
            <person name="Shibahara T."/>
            <person name="Tanaka T."/>
            <person name="Ishii S."/>
            <person name="Yamamoto J."/>
            <person name="Saito K."/>
            <person name="Kawai Y."/>
            <person name="Isono Y."/>
            <person name="Nakamura Y."/>
            <person name="Nagahari K."/>
            <person name="Murakami K."/>
            <person name="Yasuda T."/>
            <person name="Iwayanagi T."/>
            <person name="Wagatsuma M."/>
            <person name="Shiratori A."/>
            <person name="Sudo H."/>
            <person name="Hosoiri T."/>
            <person name="Kaku Y."/>
            <person name="Kodaira H."/>
            <person name="Kondo H."/>
            <person name="Sugawara M."/>
            <person name="Takahashi M."/>
            <person name="Kanda K."/>
            <person name="Yokoi T."/>
            <person name="Furuya T."/>
            <person name="Kikkawa E."/>
            <person name="Omura Y."/>
            <person name="Abe K."/>
            <person name="Kamihara K."/>
            <person name="Katsuta N."/>
            <person name="Sato K."/>
            <person name="Tanikawa M."/>
            <person name="Yamazaki M."/>
            <person name="Ninomiya K."/>
            <person name="Ishibashi T."/>
            <person name="Yamashita H."/>
            <person name="Murakawa K."/>
            <person name="Fujimori K."/>
            <person name="Tanai H."/>
            <person name="Kimata M."/>
            <person name="Watanabe M."/>
            <person name="Hiraoka S."/>
            <person name="Chiba Y."/>
            <person name="Ishida S."/>
            <person name="Ono Y."/>
            <person name="Takiguchi S."/>
            <person name="Watanabe S."/>
            <person name="Yosida M."/>
            <person name="Hotuta T."/>
            <person name="Kusano J."/>
            <person name="Kanehori K."/>
            <person name="Takahashi-Fujii A."/>
            <person name="Hara H."/>
            <person name="Tanase T.-O."/>
            <person name="Nomura Y."/>
            <person name="Togiya S."/>
            <person name="Komai F."/>
            <person name="Hara R."/>
            <person name="Takeuchi K."/>
            <person name="Arita M."/>
            <person name="Imose N."/>
            <person name="Musashino K."/>
            <person name="Yuuki H."/>
            <person name="Oshima A."/>
            <person name="Sasaki N."/>
            <person name="Aotsuka S."/>
            <person name="Yoshikawa Y."/>
            <person name="Matsunawa H."/>
            <person name="Ichihara T."/>
            <person name="Shiohata N."/>
            <person name="Sano S."/>
            <person name="Moriya S."/>
            <person name="Momiyama H."/>
            <person name="Satoh N."/>
            <person name="Takami S."/>
            <person name="Terashima Y."/>
            <person name="Suzuki O."/>
            <person name="Nakagawa S."/>
            <person name="Senoh A."/>
            <person name="Mizoguchi H."/>
            <person name="Goto Y."/>
            <person name="Shimizu F."/>
            <person name="Wakebe H."/>
            <person name="Hishigaki H."/>
            <person name="Watanabe T."/>
            <person name="Sugiyama A."/>
            <person name="Takemoto M."/>
            <person name="Kawakami B."/>
            <person name="Yamazaki M."/>
            <person name="Watanabe K."/>
            <person name="Kumagai A."/>
            <person name="Itakura S."/>
            <person name="Fukuzumi Y."/>
            <person name="Fujimori Y."/>
            <person name="Komiyama M."/>
            <person name="Tashiro H."/>
            <person name="Tanigami A."/>
            <person name="Fujiwara T."/>
            <person name="Ono T."/>
            <person name="Yamada K."/>
            <person name="Fujii Y."/>
            <person name="Ozaki K."/>
            <person name="Hirao M."/>
            <person name="Ohmori Y."/>
            <person name="Kawabata A."/>
            <person name="Hikiji T."/>
            <person name="Kobatake N."/>
            <person name="Inagaki H."/>
            <person name="Ikema Y."/>
            <person name="Okamoto S."/>
            <person name="Okitani R."/>
            <person name="Kawakami T."/>
            <person name="Noguchi S."/>
            <person name="Itoh T."/>
            <person name="Shigeta K."/>
            <person name="Senba T."/>
            <person name="Matsumura K."/>
            <person name="Nakajima Y."/>
            <person name="Mizuno T."/>
            <person name="Morinaga M."/>
            <person name="Sasaki M."/>
            <person name="Togashi T."/>
            <person name="Oyama M."/>
            <person name="Hata H."/>
            <person name="Watanabe M."/>
            <person name="Komatsu T."/>
            <person name="Mizushima-Sugano J."/>
            <person name="Satoh T."/>
            <person name="Shirai Y."/>
            <person name="Takahashi Y."/>
            <person name="Nakagawa K."/>
            <person name="Okumura K."/>
            <person name="Nagase T."/>
            <person name="Nomura N."/>
            <person name="Kikuchi H."/>
            <person name="Masuho Y."/>
            <person name="Yamashita R."/>
            <person name="Nakai K."/>
            <person name="Yada T."/>
            <person name="Nakamura Y."/>
            <person name="Ohara O."/>
            <person name="Isogai T."/>
            <person name="Sugano S."/>
        </authorList>
    </citation>
    <scope>NUCLEOTIDE SEQUENCE [LARGE SCALE MRNA] (ISOFORMS 1 AND 3)</scope>
    <source>
        <tissue>Caudate nucleus</tissue>
    </source>
</reference>
<reference key="5">
    <citation type="submission" date="2005-07" db="EMBL/GenBank/DDBJ databases">
        <authorList>
            <person name="Mural R.J."/>
            <person name="Istrail S."/>
            <person name="Sutton G.G."/>
            <person name="Florea L."/>
            <person name="Halpern A.L."/>
            <person name="Mobarry C.M."/>
            <person name="Lippert R."/>
            <person name="Walenz B."/>
            <person name="Shatkay H."/>
            <person name="Dew I."/>
            <person name="Miller J.R."/>
            <person name="Flanigan M.J."/>
            <person name="Edwards N.J."/>
            <person name="Bolanos R."/>
            <person name="Fasulo D."/>
            <person name="Halldorsson B.V."/>
            <person name="Hannenhalli S."/>
            <person name="Turner R."/>
            <person name="Yooseph S."/>
            <person name="Lu F."/>
            <person name="Nusskern D.R."/>
            <person name="Shue B.C."/>
            <person name="Zheng X.H."/>
            <person name="Zhong F."/>
            <person name="Delcher A.L."/>
            <person name="Huson D.H."/>
            <person name="Kravitz S.A."/>
            <person name="Mouchard L."/>
            <person name="Reinert K."/>
            <person name="Remington K.A."/>
            <person name="Clark A.G."/>
            <person name="Waterman M.S."/>
            <person name="Eichler E.E."/>
            <person name="Adams M.D."/>
            <person name="Hunkapiller M.W."/>
            <person name="Myers E.W."/>
            <person name="Venter J.C."/>
        </authorList>
    </citation>
    <scope>NUCLEOTIDE SEQUENCE [LARGE SCALE GENOMIC DNA]</scope>
</reference>
<reference key="6">
    <citation type="journal article" date="2004" name="Genome Res.">
        <title>The status, quality, and expansion of the NIH full-length cDNA project: the Mammalian Gene Collection (MGC).</title>
        <authorList>
            <consortium name="The MGC Project Team"/>
        </authorList>
    </citation>
    <scope>NUCLEOTIDE SEQUENCE [LARGE SCALE MRNA] (ISOFORM 1)</scope>
    <scope>VARIANT PRO-343</scope>
    <source>
        <tissue>Lung</tissue>
        <tissue>Placenta</tissue>
    </source>
</reference>
<reference key="7">
    <citation type="journal article" date="2011" name="BMC Syst. Biol.">
        <title>Initial characterization of the human central proteome.</title>
        <authorList>
            <person name="Burkard T.R."/>
            <person name="Planyavsky M."/>
            <person name="Kaupe I."/>
            <person name="Breitwieser F.P."/>
            <person name="Buerckstuemmer T."/>
            <person name="Bennett K.L."/>
            <person name="Superti-Furga G."/>
            <person name="Colinge J."/>
        </authorList>
    </citation>
    <scope>IDENTIFICATION BY MASS SPECTROMETRY [LARGE SCALE ANALYSIS]</scope>
</reference>
<reference key="8">
    <citation type="journal article" date="2014" name="J. Proteomics">
        <title>An enzyme assisted RP-RPLC approach for in-depth analysis of human liver phosphoproteome.</title>
        <authorList>
            <person name="Bian Y."/>
            <person name="Song C."/>
            <person name="Cheng K."/>
            <person name="Dong M."/>
            <person name="Wang F."/>
            <person name="Huang J."/>
            <person name="Sun D."/>
            <person name="Wang L."/>
            <person name="Ye M."/>
            <person name="Zou H."/>
        </authorList>
    </citation>
    <scope>IDENTIFICATION BY MASS SPECTROMETRY [LARGE SCALE ANALYSIS]</scope>
    <source>
        <tissue>Liver</tissue>
    </source>
</reference>
<reference key="9">
    <citation type="journal article" date="2015" name="Hum. Mol. Genet.">
        <title>Characterization of mitochondrial FOXRED1 in the assembly of respiratory chain complex I.</title>
        <authorList>
            <person name="Formosa L.E."/>
            <person name="Mimaki M."/>
            <person name="Frazier A.E."/>
            <person name="McKenzie M."/>
            <person name="Stait T.L."/>
            <person name="Thorburn D.R."/>
            <person name="Stroud D.A."/>
            <person name="Ryan M.T."/>
        </authorList>
    </citation>
    <scope>FUNCTION</scope>
    <scope>SUBCELLULAR LOCATION</scope>
    <scope>SUBUNIT</scope>
    <scope>CHARACTERIZATION OF VARIANTS MC1DN19 TRP-352 AND SER-430</scope>
    <scope>MUTAGENESIS OF TYR-327; TYR-349; TYR-359; TYR-410 AND TYR-411</scope>
</reference>
<reference key="10">
    <citation type="journal article" date="2015" name="Biochim. Biophys. Acta">
        <title>Evolution of FOXRED1, an FAD-dependent oxidoreductase necessary for NADH:ubiquinone oxidoreductase (Complex I) assembly.</title>
        <authorList>
            <person name="Lemire B.D."/>
        </authorList>
    </citation>
    <scope>IDENTIFICATION</scope>
</reference>
<reference key="11">
    <citation type="journal article" date="2015" name="Proteomics">
        <title>N-terminome analysis of the human mitochondrial proteome.</title>
        <authorList>
            <person name="Vaca Jacome A.S."/>
            <person name="Rabilloud T."/>
            <person name="Schaeffer-Reiss C."/>
            <person name="Rompais M."/>
            <person name="Ayoub D."/>
            <person name="Lane L."/>
            <person name="Bairoch A."/>
            <person name="Van Dorsselaer A."/>
            <person name="Carapito C."/>
        </authorList>
    </citation>
    <scope>IDENTIFICATION BY MASS SPECTROMETRY [LARGE SCALE ANALYSIS]</scope>
</reference>
<reference key="12">
    <citation type="journal article" date="2010" name="Hum. Mol. Genet.">
        <title>FOXRED1, encoding an FAD-dependent oxidoreductase complex-I-specific molecular chaperone, is mutated in infantile-onset mitochondrial encephalopathy.</title>
        <authorList>
            <person name="Fassone E."/>
            <person name="Duncan A.J."/>
            <person name="Taanman J.W."/>
            <person name="Pagnamenta A.T."/>
            <person name="Sadowski M.I."/>
            <person name="Holand T."/>
            <person name="Qasim W."/>
            <person name="Rutland P."/>
            <person name="Calvo S.E."/>
            <person name="Mootha V.K."/>
            <person name="Bitner-Glindzicz M."/>
            <person name="Rahman S."/>
        </authorList>
    </citation>
    <scope>VARIANT MC1DN19 TRP-352</scope>
    <scope>FUNCTION</scope>
    <scope>SUBCELLULAR LOCATION</scope>
</reference>
<reference key="13">
    <citation type="journal article" date="2010" name="Nat. Genet.">
        <title>High-throughput, pooled sequencing identifies mutations in NUBPL and FOXRED1 in human complex I deficiency.</title>
        <authorList>
            <person name="Calvo S.E."/>
            <person name="Tucker E.J."/>
            <person name="Compton A.G."/>
            <person name="Kirby D.M."/>
            <person name="Crawford G."/>
            <person name="Burtt N.P."/>
            <person name="Rivas M."/>
            <person name="Guiducci C."/>
            <person name="Bruno D.L."/>
            <person name="Goldberger O.A."/>
            <person name="Redman M.C."/>
            <person name="Wiltshire E."/>
            <person name="Wilson C.J."/>
            <person name="Altshuler D."/>
            <person name="Gabriel S.B."/>
            <person name="Daly M.J."/>
            <person name="Thorburn D.R."/>
            <person name="Mootha V.K."/>
        </authorList>
    </citation>
    <scope>VARIANTS MC1DN19 232-GLN--ILE-486 DEL AND SER-430</scope>
</reference>
<sequence length="486" mass="53812">MIRRVLPHGMGRGLLTRRPGTRRGGFSLDWDGKVSEIKKKIKSILPGRSCDLLQDTSHLPPEHSDVVIVGGGVLGLSVAYWLKKLESRRGAIRVLVVERDHTYSQASTGLSVGGICQQFSLPENIQLSLFSASFLRNINEYLAVVDAPPLDLRFNPSGYLLLASEKDAAAMESNVKVQRQEGAKVSLMSPDQLRNKFPWINTEGVALASYGMEDEGWFDPWCLLQGLRRKVQSLGVLFCQGEVTRFVSSSQRMLTTDDKAVVLKRIHEVHVKMDRSLEYQPVECAIVINAAGAWSAQIAALAGVGEGPPGTLQGTKLPVEPRKRYVYVWHCPQGPGLETPLVADTSGAYFRREGLGSNYLGGRSPTEQEEPDPANLEVDHDFFQDKVWPHLALRVPAFETLKVQSAWAGYYDYNTFDQNGVVGPHPLVVNMYFATGFSGHGLQQAPGIGRAVAEMVLKGRFQTIDLSPFLFTRFYLGEKIQENNII</sequence>
<proteinExistence type="evidence at protein level"/>
<feature type="chain" id="PRO_0000274142" description="FAD-dependent oxidoreductase domain-containing protein 1">
    <location>
        <begin position="1"/>
        <end position="486"/>
    </location>
</feature>
<feature type="transmembrane region" description="Helical" evidence="2">
    <location>
        <begin position="62"/>
        <end position="82"/>
    </location>
</feature>
<feature type="splice variant" id="VSP_022629" description="In isoform 2." evidence="8">
    <location>
        <begin position="1"/>
        <end position="211"/>
    </location>
</feature>
<feature type="splice variant" id="VSP_039003" description="In isoform 3." evidence="7">
    <original>MIRRVLPHGMGRGLLTRRPGTRRGGFSL</original>
    <variation>MAHTGRTVGRLGEG</variation>
    <location>
        <begin position="1"/>
        <end position="28"/>
    </location>
</feature>
<feature type="sequence variant" id="VAR_033856" description="In dbSNP:rs34542988.">
    <original>V</original>
    <variation>I</variation>
    <location>
        <position position="145"/>
    </location>
</feature>
<feature type="sequence variant" id="VAR_081414" description="In MC1DN19." evidence="4">
    <location>
        <begin position="232"/>
        <end position="486"/>
    </location>
</feature>
<feature type="sequence variant" id="VAR_030192" description="In dbSNP:rs17855445." evidence="3">
    <original>A</original>
    <variation>P</variation>
    <location>
        <position position="343"/>
    </location>
</feature>
<feature type="sequence variant" id="VAR_073273" description="In MC1DN19; hypomorphic variant in vitro; dbSNP:rs387907087." evidence="5 6">
    <original>R</original>
    <variation>W</variation>
    <location>
        <position position="352"/>
    </location>
</feature>
<feature type="sequence variant" id="VAR_051003" description="In dbSNP:rs7116126.">
    <original>H</original>
    <variation>R</variation>
    <location>
        <position position="380"/>
    </location>
</feature>
<feature type="sequence variant" id="VAR_064571" description="In MC1DN19; hypomorphic variant in vitro; dbSNP:rs267606830." evidence="4 6">
    <original>N</original>
    <variation>S</variation>
    <location>
        <position position="430"/>
    </location>
</feature>
<feature type="mutagenesis site" description="No effect. Able to restore complex I assembly when expressed in cells lacking FOXRED1." evidence="6">
    <original>Y</original>
    <variation>A</variation>
    <variation>F</variation>
    <location>
        <position position="327"/>
    </location>
</feature>
<feature type="mutagenesis site" description="No effect. Able to restore complex I assembly when expressed in cells lacking FOXRED1." evidence="6">
    <original>Y</original>
    <variation>A</variation>
    <variation>F</variation>
    <location>
        <position position="349"/>
    </location>
</feature>
<feature type="mutagenesis site" description="Not able to restore complex I assembly when expressed in cells lacking FOXRED1." evidence="6">
    <original>Y</original>
    <variation>A</variation>
    <location>
        <position position="359"/>
    </location>
</feature>
<feature type="mutagenesis site" description="No effect. Able to restore complex I assembly when expressed in cells lacking FOXRED1." evidence="6">
    <original>Y</original>
    <variation>F</variation>
    <location>
        <position position="359"/>
    </location>
</feature>
<feature type="mutagenesis site" description="No effect. Able to restore complex I assembly when expressed in cells lacking FOXRED1." evidence="6">
    <original>Y</original>
    <variation>A</variation>
    <variation>F</variation>
    <location>
        <position position="410"/>
    </location>
</feature>
<feature type="mutagenesis site" description="No effect. Able to restore complex I assembly when expressed in cells lacking FOXRED1." evidence="6">
    <original>Y</original>
    <variation>A</variation>
    <variation>F</variation>
    <location>
        <position position="411"/>
    </location>
</feature>
<feature type="sequence conflict" description="In Ref. 3; AAQ04652." evidence="9" ref="3">
    <original>H</original>
    <variation>HF</variation>
    <location>
        <position position="425"/>
    </location>
</feature>
<name>FXRD1_HUMAN</name>
<accession>Q96CU9</accession>
<accession>B3KN84</accession>
<accession>B4DHU2</accession>
<accession>Q71MG0</accession>
<accession>Q9BU39</accession>
<accession>Q9UKY9</accession>
<gene>
    <name evidence="11" type="primary">FOXRED1</name>
    <name type="ORF">FP634</name>
</gene>